<comment type="function">
    <text evidence="1">Binds together with bS18 to 16S ribosomal RNA.</text>
</comment>
<comment type="similarity">
    <text evidence="1">Belongs to the bacterial ribosomal protein bS6 family.</text>
</comment>
<reference key="1">
    <citation type="journal article" date="2002" name="Proc. Natl. Acad. Sci. U.S.A.">
        <title>The genome sequence of Bifidobacterium longum reflects its adaptation to the human gastrointestinal tract.</title>
        <authorList>
            <person name="Schell M.A."/>
            <person name="Karmirantzou M."/>
            <person name="Snel B."/>
            <person name="Vilanova D."/>
            <person name="Berger B."/>
            <person name="Pessi G."/>
            <person name="Zwahlen M.-C."/>
            <person name="Desiere F."/>
            <person name="Bork P."/>
            <person name="Delley M."/>
            <person name="Pridmore R.D."/>
            <person name="Arigoni F."/>
        </authorList>
    </citation>
    <scope>NUCLEOTIDE SEQUENCE [LARGE SCALE GENOMIC DNA]</scope>
    <source>
        <strain>NCC 2705</strain>
    </source>
</reference>
<name>RS6_BIFLO</name>
<protein>
    <recommendedName>
        <fullName evidence="1">Small ribosomal subunit protein bS6</fullName>
    </recommendedName>
    <alternativeName>
        <fullName evidence="2">30S ribosomal protein S6</fullName>
    </alternativeName>
</protein>
<gene>
    <name evidence="1" type="primary">rpsF</name>
    <name type="ordered locus">BL0416</name>
</gene>
<accession>Q8G756</accession>
<organism>
    <name type="scientific">Bifidobacterium longum (strain NCC 2705)</name>
    <dbReference type="NCBI Taxonomy" id="206672"/>
    <lineage>
        <taxon>Bacteria</taxon>
        <taxon>Bacillati</taxon>
        <taxon>Actinomycetota</taxon>
        <taxon>Actinomycetes</taxon>
        <taxon>Bifidobacteriales</taxon>
        <taxon>Bifidobacteriaceae</taxon>
        <taxon>Bifidobacterium</taxon>
    </lineage>
</organism>
<keyword id="KW-1185">Reference proteome</keyword>
<keyword id="KW-0687">Ribonucleoprotein</keyword>
<keyword id="KW-0689">Ribosomal protein</keyword>
<keyword id="KW-0694">RNA-binding</keyword>
<keyword id="KW-0699">rRNA-binding</keyword>
<sequence length="97" mass="11174">MMSAHKYELMFIADPELDERGLKKLTEQYLELVTKEGGSFDEPDYWGRRKLAYEIAGKTEGNYVVVKYTAEPATSDELDRVLNLNESVIRTKILRKG</sequence>
<dbReference type="EMBL" id="AE014295">
    <property type="protein sequence ID" value="AAN24253.1"/>
    <property type="molecule type" value="Genomic_DNA"/>
</dbReference>
<dbReference type="RefSeq" id="NP_695617.1">
    <property type="nucleotide sequence ID" value="NC_004307.2"/>
</dbReference>
<dbReference type="SMR" id="Q8G756"/>
<dbReference type="STRING" id="206672.BL0416"/>
<dbReference type="EnsemblBacteria" id="AAN24253">
    <property type="protein sequence ID" value="AAN24253"/>
    <property type="gene ID" value="BL0416"/>
</dbReference>
<dbReference type="KEGG" id="blo:BL0416"/>
<dbReference type="PATRIC" id="fig|206672.9.peg.1161"/>
<dbReference type="HOGENOM" id="CLU_113441_5_3_11"/>
<dbReference type="OrthoDB" id="9812702at2"/>
<dbReference type="PhylomeDB" id="Q8G756"/>
<dbReference type="Proteomes" id="UP000000439">
    <property type="component" value="Chromosome"/>
</dbReference>
<dbReference type="GO" id="GO:0005737">
    <property type="term" value="C:cytoplasm"/>
    <property type="evidence" value="ECO:0007669"/>
    <property type="project" value="UniProtKB-ARBA"/>
</dbReference>
<dbReference type="GO" id="GO:1990904">
    <property type="term" value="C:ribonucleoprotein complex"/>
    <property type="evidence" value="ECO:0007669"/>
    <property type="project" value="UniProtKB-KW"/>
</dbReference>
<dbReference type="GO" id="GO:0005840">
    <property type="term" value="C:ribosome"/>
    <property type="evidence" value="ECO:0007669"/>
    <property type="project" value="UniProtKB-KW"/>
</dbReference>
<dbReference type="GO" id="GO:0070181">
    <property type="term" value="F:small ribosomal subunit rRNA binding"/>
    <property type="evidence" value="ECO:0007669"/>
    <property type="project" value="TreeGrafter"/>
</dbReference>
<dbReference type="GO" id="GO:0003735">
    <property type="term" value="F:structural constituent of ribosome"/>
    <property type="evidence" value="ECO:0007669"/>
    <property type="project" value="InterPro"/>
</dbReference>
<dbReference type="GO" id="GO:0006412">
    <property type="term" value="P:translation"/>
    <property type="evidence" value="ECO:0007669"/>
    <property type="project" value="UniProtKB-UniRule"/>
</dbReference>
<dbReference type="CDD" id="cd00473">
    <property type="entry name" value="bS6"/>
    <property type="match status" value="1"/>
</dbReference>
<dbReference type="Gene3D" id="3.30.70.60">
    <property type="match status" value="1"/>
</dbReference>
<dbReference type="HAMAP" id="MF_00360">
    <property type="entry name" value="Ribosomal_bS6"/>
    <property type="match status" value="1"/>
</dbReference>
<dbReference type="InterPro" id="IPR000529">
    <property type="entry name" value="Ribosomal_bS6"/>
</dbReference>
<dbReference type="InterPro" id="IPR035980">
    <property type="entry name" value="Ribosomal_bS6_sf"/>
</dbReference>
<dbReference type="InterPro" id="IPR020814">
    <property type="entry name" value="Ribosomal_S6_plastid/chlpt"/>
</dbReference>
<dbReference type="InterPro" id="IPR014717">
    <property type="entry name" value="Transl_elong_EF1B/ribsomal_bS6"/>
</dbReference>
<dbReference type="NCBIfam" id="TIGR00166">
    <property type="entry name" value="S6"/>
    <property type="match status" value="1"/>
</dbReference>
<dbReference type="PANTHER" id="PTHR21011">
    <property type="entry name" value="MITOCHONDRIAL 28S RIBOSOMAL PROTEIN S6"/>
    <property type="match status" value="1"/>
</dbReference>
<dbReference type="PANTHER" id="PTHR21011:SF1">
    <property type="entry name" value="SMALL RIBOSOMAL SUBUNIT PROTEIN BS6M"/>
    <property type="match status" value="1"/>
</dbReference>
<dbReference type="Pfam" id="PF01250">
    <property type="entry name" value="Ribosomal_S6"/>
    <property type="match status" value="1"/>
</dbReference>
<dbReference type="SUPFAM" id="SSF54995">
    <property type="entry name" value="Ribosomal protein S6"/>
    <property type="match status" value="1"/>
</dbReference>
<evidence type="ECO:0000255" key="1">
    <source>
        <dbReference type="HAMAP-Rule" id="MF_00360"/>
    </source>
</evidence>
<evidence type="ECO:0000305" key="2"/>
<proteinExistence type="inferred from homology"/>
<feature type="chain" id="PRO_0000176731" description="Small ribosomal subunit protein bS6">
    <location>
        <begin position="1"/>
        <end position="97"/>
    </location>
</feature>